<keyword id="KW-0687">Ribonucleoprotein</keyword>
<keyword id="KW-0689">Ribosomal protein</keyword>
<keyword id="KW-0694">RNA-binding</keyword>
<keyword id="KW-0699">rRNA-binding</keyword>
<gene>
    <name evidence="1" type="primary">rpsS</name>
    <name type="ordered locus">swp_2015</name>
</gene>
<comment type="function">
    <text evidence="1">Protein S19 forms a complex with S13 that binds strongly to the 16S ribosomal RNA.</text>
</comment>
<comment type="similarity">
    <text evidence="1">Belongs to the universal ribosomal protein uS19 family.</text>
</comment>
<organism>
    <name type="scientific">Shewanella piezotolerans (strain WP3 / JCM 13877)</name>
    <dbReference type="NCBI Taxonomy" id="225849"/>
    <lineage>
        <taxon>Bacteria</taxon>
        <taxon>Pseudomonadati</taxon>
        <taxon>Pseudomonadota</taxon>
        <taxon>Gammaproteobacteria</taxon>
        <taxon>Alteromonadales</taxon>
        <taxon>Shewanellaceae</taxon>
        <taxon>Shewanella</taxon>
    </lineage>
</organism>
<reference key="1">
    <citation type="journal article" date="2008" name="PLoS ONE">
        <title>Environmental adaptation: genomic analysis of the piezotolerant and psychrotolerant deep-sea iron reducing bacterium Shewanella piezotolerans WP3.</title>
        <authorList>
            <person name="Wang F."/>
            <person name="Wang J."/>
            <person name="Jian H."/>
            <person name="Zhang B."/>
            <person name="Li S."/>
            <person name="Wang F."/>
            <person name="Zeng X."/>
            <person name="Gao L."/>
            <person name="Bartlett D.H."/>
            <person name="Yu J."/>
            <person name="Hu S."/>
            <person name="Xiao X."/>
        </authorList>
    </citation>
    <scope>NUCLEOTIDE SEQUENCE [LARGE SCALE GENOMIC DNA]</scope>
    <source>
        <strain>WP3 / JCM 13877</strain>
    </source>
</reference>
<protein>
    <recommendedName>
        <fullName evidence="1">Small ribosomal subunit protein uS19</fullName>
    </recommendedName>
    <alternativeName>
        <fullName evidence="2">30S ribosomal protein S19</fullName>
    </alternativeName>
</protein>
<dbReference type="EMBL" id="CP000472">
    <property type="protein sequence ID" value="ACJ28771.1"/>
    <property type="molecule type" value="Genomic_DNA"/>
</dbReference>
<dbReference type="RefSeq" id="WP_006083596.1">
    <property type="nucleotide sequence ID" value="NC_011566.1"/>
</dbReference>
<dbReference type="SMR" id="B8CND7"/>
<dbReference type="STRING" id="225849.swp_2015"/>
<dbReference type="GeneID" id="94726190"/>
<dbReference type="KEGG" id="swp:swp_2015"/>
<dbReference type="eggNOG" id="COG0185">
    <property type="taxonomic scope" value="Bacteria"/>
</dbReference>
<dbReference type="HOGENOM" id="CLU_144911_0_1_6"/>
<dbReference type="OrthoDB" id="9797833at2"/>
<dbReference type="Proteomes" id="UP000000753">
    <property type="component" value="Chromosome"/>
</dbReference>
<dbReference type="GO" id="GO:0005737">
    <property type="term" value="C:cytoplasm"/>
    <property type="evidence" value="ECO:0007669"/>
    <property type="project" value="UniProtKB-ARBA"/>
</dbReference>
<dbReference type="GO" id="GO:0015935">
    <property type="term" value="C:small ribosomal subunit"/>
    <property type="evidence" value="ECO:0007669"/>
    <property type="project" value="InterPro"/>
</dbReference>
<dbReference type="GO" id="GO:0019843">
    <property type="term" value="F:rRNA binding"/>
    <property type="evidence" value="ECO:0007669"/>
    <property type="project" value="UniProtKB-UniRule"/>
</dbReference>
<dbReference type="GO" id="GO:0003735">
    <property type="term" value="F:structural constituent of ribosome"/>
    <property type="evidence" value="ECO:0007669"/>
    <property type="project" value="InterPro"/>
</dbReference>
<dbReference type="GO" id="GO:0000028">
    <property type="term" value="P:ribosomal small subunit assembly"/>
    <property type="evidence" value="ECO:0007669"/>
    <property type="project" value="TreeGrafter"/>
</dbReference>
<dbReference type="GO" id="GO:0006412">
    <property type="term" value="P:translation"/>
    <property type="evidence" value="ECO:0007669"/>
    <property type="project" value="UniProtKB-UniRule"/>
</dbReference>
<dbReference type="FunFam" id="3.30.860.10:FF:000001">
    <property type="entry name" value="30S ribosomal protein S19"/>
    <property type="match status" value="1"/>
</dbReference>
<dbReference type="Gene3D" id="3.30.860.10">
    <property type="entry name" value="30s Ribosomal Protein S19, Chain A"/>
    <property type="match status" value="1"/>
</dbReference>
<dbReference type="HAMAP" id="MF_00531">
    <property type="entry name" value="Ribosomal_uS19"/>
    <property type="match status" value="1"/>
</dbReference>
<dbReference type="InterPro" id="IPR002222">
    <property type="entry name" value="Ribosomal_uS19"/>
</dbReference>
<dbReference type="InterPro" id="IPR005732">
    <property type="entry name" value="Ribosomal_uS19_bac-type"/>
</dbReference>
<dbReference type="InterPro" id="IPR020934">
    <property type="entry name" value="Ribosomal_uS19_CS"/>
</dbReference>
<dbReference type="InterPro" id="IPR023575">
    <property type="entry name" value="Ribosomal_uS19_SF"/>
</dbReference>
<dbReference type="NCBIfam" id="TIGR01050">
    <property type="entry name" value="rpsS_bact"/>
    <property type="match status" value="1"/>
</dbReference>
<dbReference type="PANTHER" id="PTHR11880">
    <property type="entry name" value="RIBOSOMAL PROTEIN S19P FAMILY MEMBER"/>
    <property type="match status" value="1"/>
</dbReference>
<dbReference type="PANTHER" id="PTHR11880:SF8">
    <property type="entry name" value="SMALL RIBOSOMAL SUBUNIT PROTEIN US19M"/>
    <property type="match status" value="1"/>
</dbReference>
<dbReference type="Pfam" id="PF00203">
    <property type="entry name" value="Ribosomal_S19"/>
    <property type="match status" value="1"/>
</dbReference>
<dbReference type="PIRSF" id="PIRSF002144">
    <property type="entry name" value="Ribosomal_S19"/>
    <property type="match status" value="1"/>
</dbReference>
<dbReference type="PRINTS" id="PR00975">
    <property type="entry name" value="RIBOSOMALS19"/>
</dbReference>
<dbReference type="SUPFAM" id="SSF54570">
    <property type="entry name" value="Ribosomal protein S19"/>
    <property type="match status" value="1"/>
</dbReference>
<dbReference type="PROSITE" id="PS00323">
    <property type="entry name" value="RIBOSOMAL_S19"/>
    <property type="match status" value="1"/>
</dbReference>
<sequence>MPRSLKKGPFIDLHLLKKVEKAMEAGDKKPIKTWSRRSMIIPNMIGLTIAVHNGRQHVPVFVTDEMIGHKLGEFSPTRTYRGHAADKKAKKR</sequence>
<proteinExistence type="inferred from homology"/>
<name>RS19_SHEPW</name>
<feature type="chain" id="PRO_1000128036" description="Small ribosomal subunit protein uS19">
    <location>
        <begin position="1"/>
        <end position="92"/>
    </location>
</feature>
<evidence type="ECO:0000255" key="1">
    <source>
        <dbReference type="HAMAP-Rule" id="MF_00531"/>
    </source>
</evidence>
<evidence type="ECO:0000305" key="2"/>
<accession>B8CND7</accession>